<keyword id="KW-0025">Alternative splicing</keyword>
<keyword id="KW-0238">DNA-binding</keyword>
<keyword id="KW-0539">Nucleus</keyword>
<keyword id="KW-1185">Reference proteome</keyword>
<keyword id="KW-0804">Transcription</keyword>
<keyword id="KW-0805">Transcription regulation</keyword>
<reference key="1">
    <citation type="journal article" date="2001" name="Biosci. Biotechnol. Biochem.">
        <title>Molecular cloning of rat USF2 cDNA and characterization of splicing variants.</title>
        <authorList>
            <person name="Takahashi K."/>
            <person name="Nishiyama C."/>
            <person name="Okumura K."/>
            <person name="Ra C."/>
            <person name="Ohtake Y."/>
            <person name="Yokota T."/>
        </authorList>
    </citation>
    <scope>NUCLEOTIDE SEQUENCE [MRNA] (ISOFORMS 1; 2; 3; 4 AND 5)</scope>
    <source>
        <tissue>Intestine</tissue>
    </source>
</reference>
<reference key="2">
    <citation type="journal article" date="2001" name="Biol. Reprod.">
        <title>Cloning and functional expression of an E box-binding protein from rat granulosa cells.</title>
        <authorList>
            <person name="Yamada K."/>
            <person name="Mizutani T."/>
            <person name="Shou Z."/>
            <person name="Yazawa T."/>
            <person name="Sekiguchi T."/>
            <person name="Yoshino M."/>
            <person name="Inazu T."/>
            <person name="Miyamoto K."/>
        </authorList>
    </citation>
    <scope>NUCLEOTIDE SEQUENCE [MRNA] (ISOFORM 1)</scope>
    <scope>CHARACTERIZATION</scope>
    <source>
        <tissue>Ovarian granulosa cell</tissue>
    </source>
</reference>
<reference key="3">
    <citation type="journal article" date="1996" name="J. Biol. Chem.">
        <title>Immunochemical characterization and transacting properties of upstream stimulatory factor isoforms.</title>
        <authorList>
            <person name="Viollet B."/>
            <person name="Lefrancois-Martinez A.-M."/>
            <person name="Henrion A."/>
            <person name="Kahn A."/>
            <person name="Raymondjean M."/>
            <person name="Martinez A."/>
        </authorList>
    </citation>
    <scope>NUCLEOTIDE SEQUENCE [MRNA] OF 56-346 (ISOFORM 1)</scope>
    <source>
        <strain>Sprague-Dawley</strain>
        <tissue>Liver</tissue>
    </source>
</reference>
<organism>
    <name type="scientific">Rattus norvegicus</name>
    <name type="common">Rat</name>
    <dbReference type="NCBI Taxonomy" id="10116"/>
    <lineage>
        <taxon>Eukaryota</taxon>
        <taxon>Metazoa</taxon>
        <taxon>Chordata</taxon>
        <taxon>Craniata</taxon>
        <taxon>Vertebrata</taxon>
        <taxon>Euteleostomi</taxon>
        <taxon>Mammalia</taxon>
        <taxon>Eutheria</taxon>
        <taxon>Euarchontoglires</taxon>
        <taxon>Glires</taxon>
        <taxon>Rodentia</taxon>
        <taxon>Myomorpha</taxon>
        <taxon>Muroidea</taxon>
        <taxon>Muridae</taxon>
        <taxon>Murinae</taxon>
        <taxon>Rattus</taxon>
    </lineage>
</organism>
<feature type="chain" id="PRO_0000127502" description="Upstream stimulatory factor 2">
    <location>
        <begin position="1"/>
        <end position="346"/>
    </location>
</feature>
<feature type="domain" description="bHLH" evidence="2">
    <location>
        <begin position="235"/>
        <end position="290"/>
    </location>
</feature>
<feature type="region of interest" description="Disordered" evidence="3">
    <location>
        <begin position="1"/>
        <end position="44"/>
    </location>
</feature>
<feature type="region of interest" description="Disordered" evidence="3">
    <location>
        <begin position="215"/>
        <end position="244"/>
    </location>
</feature>
<feature type="region of interest" description="Leucine-zipper">
    <location>
        <begin position="307"/>
        <end position="328"/>
    </location>
</feature>
<feature type="compositionally biased region" description="Low complexity" evidence="3">
    <location>
        <begin position="11"/>
        <end position="20"/>
    </location>
</feature>
<feature type="compositionally biased region" description="Basic and acidic residues" evidence="3">
    <location>
        <begin position="226"/>
        <end position="244"/>
    </location>
</feature>
<feature type="splice variant" id="VSP_016542" description="In isoform 4." evidence="4">
    <original>SHDKGPE</original>
    <variation>RRGRPGG</variation>
    <location>
        <begin position="21"/>
        <end position="27"/>
    </location>
</feature>
<feature type="splice variant" id="VSP_016543" description="In isoform 5." evidence="4">
    <original>SH</original>
    <variation>RL</variation>
    <location>
        <begin position="21"/>
        <end position="22"/>
    </location>
</feature>
<feature type="splice variant" id="VSP_016544" description="In isoform 5." evidence="4">
    <location>
        <begin position="23"/>
        <end position="346"/>
    </location>
</feature>
<feature type="splice variant" id="VSP_016545" description="In isoform 4." evidence="4">
    <location>
        <begin position="28"/>
        <end position="346"/>
    </location>
</feature>
<feature type="splice variant" id="VSP_016546" description="In isoform 3." evidence="4">
    <location>
        <begin position="77"/>
        <end position="143"/>
    </location>
</feature>
<feature type="splice variant" id="VSP_016547" description="In isoform 2." evidence="4">
    <location>
        <begin position="117"/>
        <end position="143"/>
    </location>
</feature>
<feature type="sequence conflict" description="In Ref. 3; CAA62338." evidence="5" ref="3">
    <original>A</original>
    <variation>T</variation>
    <location>
        <position position="95"/>
    </location>
</feature>
<proteinExistence type="evidence at protein level"/>
<sequence length="346" mass="36954">MDMLDPGLDPASSATAAAAASHDKGPEAEEGVELQEGGDGPGAEEQTAVAIASVQQAAFGDHNIQYQFRTESNGGQVTYRVVQVTDGQLDGQGDAAGAVSVVSTAAFAGGQQAVTQVGVDGAAQRPGPAAASVPTGPAAPFPLAVIQNPFSNGGSPAAEAVSGEARFAYFPASSVGDTTAVSVQTTDQSLQAGGQFYVMMTPQDVLQTGTQRTIAPRTHPYSPKIDGTRTPRDERRRAQHNEVERRRRDKINNWIVQLSKIIPDCHADNSKTGASKGGILSKACDYIRELRQTNQRMQETFKEAERLQMDNELLRQQIEELKNENALLRAQLQQHNLEMVGESTRQ</sequence>
<dbReference type="EMBL" id="AB035647">
    <property type="protein sequence ID" value="BAB19964.1"/>
    <property type="molecule type" value="mRNA"/>
</dbReference>
<dbReference type="EMBL" id="AB035648">
    <property type="protein sequence ID" value="BAB19965.1"/>
    <property type="molecule type" value="mRNA"/>
</dbReference>
<dbReference type="EMBL" id="AB035649">
    <property type="protein sequence ID" value="BAB19966.1"/>
    <property type="molecule type" value="mRNA"/>
</dbReference>
<dbReference type="EMBL" id="AB035650">
    <property type="protein sequence ID" value="BAB19967.1"/>
    <property type="molecule type" value="mRNA"/>
</dbReference>
<dbReference type="EMBL" id="AB035651">
    <property type="protein sequence ID" value="BAB19968.1"/>
    <property type="molecule type" value="mRNA"/>
</dbReference>
<dbReference type="EMBL" id="AB047556">
    <property type="protein sequence ID" value="BAB20993.1"/>
    <property type="molecule type" value="mRNA"/>
</dbReference>
<dbReference type="EMBL" id="X90823">
    <property type="protein sequence ID" value="CAA62338.1"/>
    <property type="molecule type" value="mRNA"/>
</dbReference>
<dbReference type="RefSeq" id="NP_112401.1">
    <molecule id="Q63665-1"/>
    <property type="nucleotide sequence ID" value="NM_031139.1"/>
</dbReference>
<dbReference type="RefSeq" id="XP_038948263.1">
    <molecule id="Q63665-3"/>
    <property type="nucleotide sequence ID" value="XM_039092335.2"/>
</dbReference>
<dbReference type="SMR" id="Q63665"/>
<dbReference type="FunCoup" id="Q63665">
    <property type="interactions" value="721"/>
</dbReference>
<dbReference type="STRING" id="10116.ENSRNOP00000072660"/>
<dbReference type="iPTMnet" id="Q63665"/>
<dbReference type="PhosphoSitePlus" id="Q63665"/>
<dbReference type="PaxDb" id="10116-ENSRNOP00000028550"/>
<dbReference type="Ensembl" id="ENSRNOT00000103509.1">
    <molecule id="Q63665-3"/>
    <property type="protein sequence ID" value="ENSRNOP00000094253.1"/>
    <property type="gene ID" value="ENSRNOG00000053725.2"/>
</dbReference>
<dbReference type="GeneID" id="81817"/>
<dbReference type="KEGG" id="rno:81817"/>
<dbReference type="UCSC" id="RGD:620975">
    <molecule id="Q63665-1"/>
    <property type="organism name" value="rat"/>
</dbReference>
<dbReference type="AGR" id="RGD:620975"/>
<dbReference type="CTD" id="7392"/>
<dbReference type="RGD" id="620975">
    <property type="gene designation" value="Usf2"/>
</dbReference>
<dbReference type="eggNOG" id="KOG1318">
    <property type="taxonomic scope" value="Eukaryota"/>
</dbReference>
<dbReference type="GeneTree" id="ENSGT00940000160704"/>
<dbReference type="InParanoid" id="Q63665"/>
<dbReference type="OrthoDB" id="66423at9989"/>
<dbReference type="PhylomeDB" id="Q63665"/>
<dbReference type="TreeFam" id="TF323338"/>
<dbReference type="PRO" id="PR:Q63665"/>
<dbReference type="Proteomes" id="UP000002494">
    <property type="component" value="Chromosome 1"/>
</dbReference>
<dbReference type="GO" id="GO:0005634">
    <property type="term" value="C:nucleus"/>
    <property type="evidence" value="ECO:0000266"/>
    <property type="project" value="RGD"/>
</dbReference>
<dbReference type="GO" id="GO:0043425">
    <property type="term" value="F:bHLH transcription factor binding"/>
    <property type="evidence" value="ECO:0000266"/>
    <property type="project" value="RGD"/>
</dbReference>
<dbReference type="GO" id="GO:0003677">
    <property type="term" value="F:DNA binding"/>
    <property type="evidence" value="ECO:0000266"/>
    <property type="project" value="RGD"/>
</dbReference>
<dbReference type="GO" id="GO:0001228">
    <property type="term" value="F:DNA-binding transcription activator activity, RNA polymerase II-specific"/>
    <property type="evidence" value="ECO:0000266"/>
    <property type="project" value="RGD"/>
</dbReference>
<dbReference type="GO" id="GO:0003700">
    <property type="term" value="F:DNA-binding transcription factor activity"/>
    <property type="evidence" value="ECO:0000315"/>
    <property type="project" value="RGD"/>
</dbReference>
<dbReference type="GO" id="GO:0000981">
    <property type="term" value="F:DNA-binding transcription factor activity, RNA polymerase II-specific"/>
    <property type="evidence" value="ECO:0000266"/>
    <property type="project" value="RGD"/>
</dbReference>
<dbReference type="GO" id="GO:0003690">
    <property type="term" value="F:double-stranded DNA binding"/>
    <property type="evidence" value="ECO:0000314"/>
    <property type="project" value="RGD"/>
</dbReference>
<dbReference type="GO" id="GO:0042802">
    <property type="term" value="F:identical protein binding"/>
    <property type="evidence" value="ECO:0000315"/>
    <property type="project" value="RGD"/>
</dbReference>
<dbReference type="GO" id="GO:0046982">
    <property type="term" value="F:protein heterodimerization activity"/>
    <property type="evidence" value="ECO:0000266"/>
    <property type="project" value="RGD"/>
</dbReference>
<dbReference type="GO" id="GO:0042803">
    <property type="term" value="F:protein homodimerization activity"/>
    <property type="evidence" value="ECO:0000266"/>
    <property type="project" value="RGD"/>
</dbReference>
<dbReference type="GO" id="GO:0044877">
    <property type="term" value="F:protein-containing complex binding"/>
    <property type="evidence" value="ECO:0000315"/>
    <property type="project" value="RGD"/>
</dbReference>
<dbReference type="GO" id="GO:0000978">
    <property type="term" value="F:RNA polymerase II cis-regulatory region sequence-specific DNA binding"/>
    <property type="evidence" value="ECO:0000314"/>
    <property type="project" value="RGD"/>
</dbReference>
<dbReference type="GO" id="GO:0043565">
    <property type="term" value="F:sequence-specific DNA binding"/>
    <property type="evidence" value="ECO:0000314"/>
    <property type="project" value="RGD"/>
</dbReference>
<dbReference type="GO" id="GO:1990837">
    <property type="term" value="F:sequence-specific double-stranded DNA binding"/>
    <property type="evidence" value="ECO:0000266"/>
    <property type="project" value="RGD"/>
</dbReference>
<dbReference type="GO" id="GO:0071333">
    <property type="term" value="P:cellular response to glucose stimulus"/>
    <property type="evidence" value="ECO:0000266"/>
    <property type="project" value="RGD"/>
</dbReference>
<dbReference type="GO" id="GO:0010255">
    <property type="term" value="P:glucose mediated signaling pathway"/>
    <property type="evidence" value="ECO:0000266"/>
    <property type="project" value="RGD"/>
</dbReference>
<dbReference type="GO" id="GO:0007595">
    <property type="term" value="P:lactation"/>
    <property type="evidence" value="ECO:0000266"/>
    <property type="project" value="RGD"/>
</dbReference>
<dbReference type="GO" id="GO:0055088">
    <property type="term" value="P:lipid homeostasis"/>
    <property type="evidence" value="ECO:0000266"/>
    <property type="project" value="RGD"/>
</dbReference>
<dbReference type="GO" id="GO:0045893">
    <property type="term" value="P:positive regulation of DNA-templated transcription"/>
    <property type="evidence" value="ECO:0000266"/>
    <property type="project" value="RGD"/>
</dbReference>
<dbReference type="GO" id="GO:0045944">
    <property type="term" value="P:positive regulation of transcription by RNA polymerase II"/>
    <property type="evidence" value="ECO:0000315"/>
    <property type="project" value="RGD"/>
</dbReference>
<dbReference type="GO" id="GO:0000432">
    <property type="term" value="P:positive regulation of transcription from RNA polymerase II promoter by glucose"/>
    <property type="evidence" value="ECO:0000266"/>
    <property type="project" value="RGD"/>
</dbReference>
<dbReference type="GO" id="GO:0006357">
    <property type="term" value="P:regulation of transcription by RNA polymerase II"/>
    <property type="evidence" value="ECO:0000266"/>
    <property type="project" value="RGD"/>
</dbReference>
<dbReference type="CDD" id="cd18923">
    <property type="entry name" value="bHLHzip_USF2"/>
    <property type="match status" value="1"/>
</dbReference>
<dbReference type="FunFam" id="4.10.280.10:FF:000045">
    <property type="entry name" value="upstream stimulatory factor 2 isoform X1"/>
    <property type="match status" value="1"/>
</dbReference>
<dbReference type="Gene3D" id="4.10.280.10">
    <property type="entry name" value="Helix-loop-helix DNA-binding domain"/>
    <property type="match status" value="1"/>
</dbReference>
<dbReference type="InterPro" id="IPR011598">
    <property type="entry name" value="bHLH_dom"/>
</dbReference>
<dbReference type="InterPro" id="IPR036638">
    <property type="entry name" value="HLH_DNA-bd_sf"/>
</dbReference>
<dbReference type="InterPro" id="IPR051732">
    <property type="entry name" value="USF"/>
</dbReference>
<dbReference type="PANTHER" id="PTHR46117">
    <property type="entry name" value="FI24210P1"/>
    <property type="match status" value="1"/>
</dbReference>
<dbReference type="PANTHER" id="PTHR46117:SF2">
    <property type="entry name" value="UPSTREAM STIMULATORY FACTOR 2"/>
    <property type="match status" value="1"/>
</dbReference>
<dbReference type="Pfam" id="PF00010">
    <property type="entry name" value="HLH"/>
    <property type="match status" value="1"/>
</dbReference>
<dbReference type="SMART" id="SM00353">
    <property type="entry name" value="HLH"/>
    <property type="match status" value="1"/>
</dbReference>
<dbReference type="SUPFAM" id="SSF47459">
    <property type="entry name" value="HLH, helix-loop-helix DNA-binding domain"/>
    <property type="match status" value="1"/>
</dbReference>
<dbReference type="PROSITE" id="PS50888">
    <property type="entry name" value="BHLH"/>
    <property type="match status" value="1"/>
</dbReference>
<gene>
    <name type="primary">Usf2</name>
</gene>
<protein>
    <recommendedName>
        <fullName>Upstream stimulatory factor 2</fullName>
    </recommendedName>
    <alternativeName>
        <fullName>Major late transcription factor 2</fullName>
    </alternativeName>
    <alternativeName>
        <fullName>Upstream transcription factor 2</fullName>
    </alternativeName>
</protein>
<name>USF2_RAT</name>
<evidence type="ECO:0000250" key="1"/>
<evidence type="ECO:0000255" key="2">
    <source>
        <dbReference type="PROSITE-ProRule" id="PRU00981"/>
    </source>
</evidence>
<evidence type="ECO:0000256" key="3">
    <source>
        <dbReference type="SAM" id="MobiDB-lite"/>
    </source>
</evidence>
<evidence type="ECO:0000303" key="4">
    <source>
    </source>
</evidence>
<evidence type="ECO:0000305" key="5"/>
<accession>Q63665</accession>
<accession>Q76MJ1</accession>
<accession>Q76MU2</accession>
<accession>Q9EQX1</accession>
<accession>Q9EQX2</accession>
<accession>Q9EQX3</accession>
<comment type="function">
    <text>Transcription factor that binds to a symmetrical DNA sequence (E-boxes) (5'-CACGTG-3') that is found in a variety of viral and cellular promoters.</text>
</comment>
<comment type="subunit">
    <text evidence="1">Interacts with MAF (By similarity). Efficient DNA binding requires dimerization with another bHLH protein. Binds DNA as a homodimer or a heterodimer (USF1/USF2).</text>
</comment>
<comment type="subcellular location">
    <subcellularLocation>
        <location>Nucleus</location>
    </subcellularLocation>
</comment>
<comment type="alternative products">
    <event type="alternative splicing"/>
    <isoform>
        <id>Q63665-1</id>
        <name>1</name>
        <name>USF2L</name>
        <name>USF2A</name>
        <sequence type="displayed"/>
    </isoform>
    <isoform>
        <id>Q63665-2</id>
        <name>2</name>
        <name>USF2delta1</name>
        <sequence type="described" ref="VSP_016547"/>
    </isoform>
    <isoform>
        <id>Q63665-3</id>
        <name>3</name>
        <name>USF2delta2</name>
        <name>USF2B</name>
        <sequence type="described" ref="VSP_016546"/>
    </isoform>
    <isoform>
        <id>Q63665-4</id>
        <name>4</name>
        <name>USF2delta3</name>
        <sequence type="described" ref="VSP_016542 VSP_016545"/>
    </isoform>
    <isoform>
        <id>Q63665-5</id>
        <name>5</name>
        <name>USF2delta4</name>
        <sequence type="described" ref="VSP_016543 VSP_016544"/>
    </isoform>
    <text>At least 2 isoforms are produced.</text>
</comment>